<accession>Q80TS5</accession>
<accession>B2RSW4</accession>
<accession>Q6PCP2</accession>
<accession>Q6X497</accession>
<accession>Q8CIQ1</accession>
<accession>Q9ESD2</accession>
<name>ZN423_MOUSE</name>
<proteinExistence type="evidence at protein level"/>
<sequence length="1292" mass="145351">MSRRKQAKPRSVKVEEGEASDFSLAWDSSVAAAGGLEGEPECDRKTSRALEDRNSVTSQEERNEDDEDVEDESIYTCDHCQQDFESLADLTDHRAHRCPGDGDDDPQLSWVASSPSSKDVASPTQMIGDGCDLGLGEEEGGTGLPYPCQFCDKSFIRLSYLKRHEQIHSDKLPFKCTFCSRLFKHKRSRDRHIKLHTGDKKYHCHECEAAFSRSDHLKIHLKTHSSSKPFKCSVCKRGFSSTSSLQSHMQAHKKNKEHLAKSEKEAKKDDFMCDYCEDTFSQTEELEKHVLTLHPQLSEKADLQCIHCPEVFVDESTLLAHIHQAHANQKHKCPMCPEQFSSVEGVYCHLDSHRQPDSSNHSVSPDPVLGSVASMSSATPDSSASVERGSTPDSTLKPLRGQKKMRDDGQSWPKVVYSCPYCSKRDFTSLAVLEIHLKTIHADKPQQSHTCQICLDSMPTLYNLNEHVRKLHKSHAYPVMQFGNISAFHCNYCPEMFADINSLQEHIRVSHCGPNANPPDGNNAFFCNQCSMGFLTESSLTEHIQQAHCSVGSTKLESPVVQPTQSFMEVYSCPYCTNSPIFGSILKLTKHIKENHKNIPLAHSKKSKAEQSPVSSDVEVSSPKRQRLSGSANSISNGEYPCNQCDLKFSNFESFQTHLKLHLELLLRKQACPQCKEDFDSQESLLQHLTVHYMTTSTHYVCESCDKQFSSVDDLQKHLLDMHTFVLYHCTLCQEVFDSKVSIQVHLAVKHSNEKKMYRCTACNWDFRKEADLQVHVKHSHLGNPAKAHKCIFCGETFSTEVELQCHITTHSKKYNCRFCSKAFHAVILLEKHLREKHCVFDAAAENGTANGVPPTSTKKAEPADLQGMLLKNPEAPNSHEASEDDVDASEPMYGCDICGAAYTMEVLLQNHRLRDHNIRPGEDDGSRKKAEFIKGSHKCNVCSRTFFSENGLREHLQTHRGPAKHYMCPICGERFPSLLTLTEHKVTHSKSLDTGTCRICKMPLQSEEEFIEHCQMHPDLRNSLTGFRCVVCMQTVTSTLELKIHGTFHMQKLAGSSAASSPNGQGLQKLYKCALCLKEFRSKQDLVRLDVNGLPYGLCAGCMARSANGQVGGLAPPEPADRPCAGLRCPECNVKFESAEDLESHMQVDHRDLTPETSGPRKGAQTSPVPRKKTYQCIKCQMTFENEREIQIHVANHMIEEGINHECKLCNQMFDSPAKLLCHLIEHSFEGMGGTFKCPVCFTVFVQANKLQQHIFAVHGQEDKIYDCSQCPQKFFFQTELQNHTMSQHAQ</sequence>
<feature type="chain" id="PRO_0000308596" description="Zinc finger protein 423">
    <location>
        <begin position="1"/>
        <end position="1292"/>
    </location>
</feature>
<feature type="zinc finger region" description="C2H2-type 1; degenerate" evidence="3">
    <location>
        <begin position="75"/>
        <end position="101"/>
    </location>
</feature>
<feature type="zinc finger region" description="C2H2-type 2" evidence="3">
    <location>
        <begin position="146"/>
        <end position="168"/>
    </location>
</feature>
<feature type="zinc finger region" description="C2H2-type 3" evidence="3">
    <location>
        <begin position="174"/>
        <end position="196"/>
    </location>
</feature>
<feature type="zinc finger region" description="C2H2-type 4" evidence="3">
    <location>
        <begin position="202"/>
        <end position="224"/>
    </location>
</feature>
<feature type="zinc finger region" description="C2H2-type 5" evidence="3">
    <location>
        <begin position="230"/>
        <end position="252"/>
    </location>
</feature>
<feature type="zinc finger region" description="C2H2-type 6" evidence="3">
    <location>
        <begin position="271"/>
        <end position="294"/>
    </location>
</feature>
<feature type="zinc finger region" description="C2H2-type 7" evidence="3">
    <location>
        <begin position="303"/>
        <end position="326"/>
    </location>
</feature>
<feature type="zinc finger region" description="C2H2-type 8" evidence="3">
    <location>
        <begin position="331"/>
        <end position="353"/>
    </location>
</feature>
<feature type="zinc finger region" description="C2H2-type 9; degenerate" evidence="3">
    <location>
        <begin position="417"/>
        <end position="441"/>
    </location>
</feature>
<feature type="zinc finger region" description="C2H2-type 10" evidence="3">
    <location>
        <begin position="449"/>
        <end position="472"/>
    </location>
</feature>
<feature type="zinc finger region" description="C2H2-type 11" evidence="3">
    <location>
        <begin position="488"/>
        <end position="511"/>
    </location>
</feature>
<feature type="zinc finger region" description="C2H2-type 12" evidence="3">
    <location>
        <begin position="525"/>
        <end position="548"/>
    </location>
</feature>
<feature type="zinc finger region" description="C2H2-type 13; atypical" evidence="3">
    <location>
        <begin position="571"/>
        <end position="596"/>
    </location>
</feature>
<feature type="zinc finger region" description="C2H2-type 14" evidence="3">
    <location>
        <begin position="640"/>
        <end position="662"/>
    </location>
</feature>
<feature type="zinc finger region" description="C2H2-type 15" evidence="3">
    <location>
        <begin position="670"/>
        <end position="692"/>
    </location>
</feature>
<feature type="zinc finger region" description="C2H2-type 16" evidence="3">
    <location>
        <begin position="700"/>
        <end position="723"/>
    </location>
</feature>
<feature type="zinc finger region" description="C2H2-type 17" evidence="3">
    <location>
        <begin position="728"/>
        <end position="751"/>
    </location>
</feature>
<feature type="zinc finger region" description="C2H2-type 18" evidence="3">
    <location>
        <begin position="758"/>
        <end position="781"/>
    </location>
</feature>
<feature type="zinc finger region" description="C2H2-type 19" evidence="3">
    <location>
        <begin position="789"/>
        <end position="811"/>
    </location>
</feature>
<feature type="zinc finger region" description="C2H2-type 20" evidence="3">
    <location>
        <begin position="815"/>
        <end position="838"/>
    </location>
</feature>
<feature type="zinc finger region" description="C2H2-type 21; degenerate" evidence="3">
    <location>
        <begin position="894"/>
        <end position="916"/>
    </location>
</feature>
<feature type="zinc finger region" description="C2H2-type 22" evidence="3">
    <location>
        <begin position="938"/>
        <end position="960"/>
    </location>
</feature>
<feature type="zinc finger region" description="C2H2-type 23" evidence="3">
    <location>
        <begin position="967"/>
        <end position="989"/>
    </location>
</feature>
<feature type="zinc finger region" description="C2H2-type 24" evidence="3">
    <location>
        <begin position="1028"/>
        <end position="1050"/>
    </location>
</feature>
<feature type="zinc finger region" description="C2H2-type 25; degenerate" evidence="3">
    <location>
        <begin position="1072"/>
        <end position="1090"/>
    </location>
</feature>
<feature type="zinc finger region" description="C2H2-type 26" evidence="3">
    <location>
        <begin position="1128"/>
        <end position="1151"/>
    </location>
</feature>
<feature type="zinc finger region" description="C2H2-type 27" evidence="3">
    <location>
        <begin position="1176"/>
        <end position="1198"/>
    </location>
</feature>
<feature type="zinc finger region" description="C2H2-type 28" evidence="3">
    <location>
        <begin position="1206"/>
        <end position="1228"/>
    </location>
</feature>
<feature type="zinc finger region" description="C2H2-type 29" evidence="3">
    <location>
        <begin position="1237"/>
        <end position="1260"/>
    </location>
</feature>
<feature type="zinc finger region" description="C2H2-type 30" evidence="3">
    <location>
        <begin position="1267"/>
        <end position="1290"/>
    </location>
</feature>
<feature type="region of interest" description="Disordered" evidence="4">
    <location>
        <begin position="1"/>
        <end position="21"/>
    </location>
</feature>
<feature type="region of interest" description="Disordered" evidence="4">
    <location>
        <begin position="33"/>
        <end position="70"/>
    </location>
</feature>
<feature type="region of interest" description="Disordered" evidence="4">
    <location>
        <begin position="95"/>
        <end position="125"/>
    </location>
</feature>
<feature type="region of interest" description="Disordered" evidence="4">
    <location>
        <begin position="354"/>
        <end position="407"/>
    </location>
</feature>
<feature type="region of interest" description="Disordered" evidence="4">
    <location>
        <begin position="598"/>
        <end position="635"/>
    </location>
</feature>
<feature type="region of interest" description="Disordered" evidence="4">
    <location>
        <begin position="1144"/>
        <end position="1171"/>
    </location>
</feature>
<feature type="compositionally biased region" description="Basic residues" evidence="4">
    <location>
        <begin position="1"/>
        <end position="11"/>
    </location>
</feature>
<feature type="compositionally biased region" description="Basic and acidic residues" evidence="4">
    <location>
        <begin position="41"/>
        <end position="54"/>
    </location>
</feature>
<feature type="compositionally biased region" description="Polar residues" evidence="4">
    <location>
        <begin position="110"/>
        <end position="125"/>
    </location>
</feature>
<feature type="compositionally biased region" description="Low complexity" evidence="4">
    <location>
        <begin position="371"/>
        <end position="385"/>
    </location>
</feature>
<feature type="compositionally biased region" description="Low complexity" evidence="4">
    <location>
        <begin position="612"/>
        <end position="623"/>
    </location>
</feature>
<feature type="compositionally biased region" description="Basic and acidic residues" evidence="4">
    <location>
        <begin position="1144"/>
        <end position="1155"/>
    </location>
</feature>
<feature type="modified residue" description="Phosphoserine" evidence="2">
    <location>
        <position position="55"/>
    </location>
</feature>
<feature type="modified residue" description="Phosphoserine" evidence="2">
    <location>
        <position position="58"/>
    </location>
</feature>
<feature type="modified residue" description="Phosphoserine" evidence="2">
    <location>
        <position position="612"/>
    </location>
</feature>
<feature type="modified residue" description="Phosphoserine" evidence="2">
    <location>
        <position position="1062"/>
    </location>
</feature>
<feature type="splice variant" id="VSP_029008" description="In isoform 2." evidence="9">
    <original>MSRRKQAKPRSVKVEEGEASDFSLAWDSSVAAA</original>
    <variation>MTGAERGPLCYH</variation>
    <location>
        <begin position="1"/>
        <end position="33"/>
    </location>
</feature>
<feature type="sequence conflict" description="In Ref. 4; AAG17053." evidence="10" ref="4">
    <original>E</original>
    <variation>K</variation>
    <location>
        <position position="735"/>
    </location>
</feature>
<feature type="sequence conflict" description="In Ref. 1; AAP33073/AAN39840." evidence="10" ref="1">
    <original>Q</original>
    <variation>R</variation>
    <location>
        <position position="1182"/>
    </location>
</feature>
<protein>
    <recommendedName>
        <fullName>Zinc finger protein 423</fullName>
    </recommendedName>
    <alternativeName>
        <fullName>Early B-cell factor-associated zinc finger protein</fullName>
    </alternativeName>
    <alternativeName>
        <fullName>Olf1/EBF-associated zinc finger protein</fullName>
    </alternativeName>
    <alternativeName>
        <fullName>Smad- and Olf-interacting zinc finger protein</fullName>
    </alternativeName>
</protein>
<keyword id="KW-0010">Activator</keyword>
<keyword id="KW-0025">Alternative splicing</keyword>
<keyword id="KW-0217">Developmental protein</keyword>
<keyword id="KW-0221">Differentiation</keyword>
<keyword id="KW-0238">DNA-binding</keyword>
<keyword id="KW-0479">Metal-binding</keyword>
<keyword id="KW-0524">Neurogenesis</keyword>
<keyword id="KW-0539">Nucleus</keyword>
<keyword id="KW-0597">Phosphoprotein</keyword>
<keyword id="KW-1185">Reference proteome</keyword>
<keyword id="KW-0677">Repeat</keyword>
<keyword id="KW-0678">Repressor</keyword>
<keyword id="KW-0804">Transcription</keyword>
<keyword id="KW-0805">Transcription regulation</keyword>
<keyword id="KW-0862">Zinc</keyword>
<keyword id="KW-0863">Zinc-finger</keyword>
<reference key="1">
    <citation type="journal article" date="2004" name="Oncogene">
        <title>Early B-cell factor-associated zinc-finger gene is a frequent target of retroviral integration in murine B-cell lymphomas.</title>
        <authorList>
            <person name="Warming S."/>
            <person name="Suzuki T."/>
            <person name="Yamaguchi T.P."/>
            <person name="Jenkins N.A."/>
            <person name="Copeland N.G."/>
        </authorList>
    </citation>
    <scope>NUCLEOTIDE SEQUENCE [MRNA] (ISOFORMS 1 AND 2)</scope>
    <source>
        <strain>BALB/cJ</strain>
        <tissue>Brain</tissue>
    </source>
</reference>
<reference key="2">
    <citation type="journal article" date="2003" name="DNA Res.">
        <title>Prediction of the coding sequences of mouse homologues of KIAA gene: II. The complete nucleotide sequences of 400 mouse KIAA-homologous cDNAs identified by screening of terminal sequences of cDNA clones randomly sampled from size-fractionated libraries.</title>
        <authorList>
            <person name="Okazaki N."/>
            <person name="Kikuno R."/>
            <person name="Ohara R."/>
            <person name="Inamoto S."/>
            <person name="Aizawa H."/>
            <person name="Yuasa S."/>
            <person name="Nakajima D."/>
            <person name="Nagase T."/>
            <person name="Ohara O."/>
            <person name="Koga H."/>
        </authorList>
    </citation>
    <scope>NUCLEOTIDE SEQUENCE [LARGE SCALE MRNA] (ISOFORM 1)</scope>
</reference>
<reference key="3">
    <citation type="journal article" date="2004" name="Genome Res.">
        <title>The status, quality, and expansion of the NIH full-length cDNA project: the Mammalian Gene Collection (MGC).</title>
        <authorList>
            <consortium name="The MGC Project Team"/>
        </authorList>
    </citation>
    <scope>NUCLEOTIDE SEQUENCE [LARGE SCALE MRNA] (ISOFORM 1)</scope>
    <source>
        <strain>C57BL/6J</strain>
        <tissue>Brain</tissue>
    </source>
</reference>
<reference key="4">
    <citation type="submission" date="1999-09" db="EMBL/GenBank/DDBJ databases">
        <title>cDNA sequence and map assignment of Ebfaz, orthologous to the zinc finger transcription factor gene Roaz.</title>
        <authorList>
            <person name="Croci L."/>
            <person name="Corradi A."/>
            <person name="Vauti F."/>
            <person name="Wurst W."/>
            <person name="Rocchi M."/>
            <person name="Consalez G.G."/>
        </authorList>
    </citation>
    <scope>NUCLEOTIDE SEQUENCE [MRNA] OF 92-1292</scope>
</reference>
<reference key="5">
    <citation type="journal article" date="2003" name="Biochem. Biophys. Res. Commun.">
        <title>Poly(ADP-ribose) polymerase 1 interacts with OAZ and regulates BMP-target genes.</title>
        <authorList>
            <person name="Ku M.-C."/>
            <person name="Stewart S."/>
            <person name="Hata A."/>
        </authorList>
    </citation>
    <scope>INTERACTION WITH PARP1</scope>
</reference>
<reference key="6">
    <citation type="journal article" date="2006" name="Mol. Cell. Biol.">
        <title>Zfp423 is required for normal cerebellar development.</title>
        <authorList>
            <person name="Warming S."/>
            <person name="Rachel R.A."/>
            <person name="Jenkins N.A."/>
            <person name="Copeland N.G."/>
        </authorList>
    </citation>
    <scope>FUNCTION</scope>
    <scope>DISRUPTION PHENOTYPE</scope>
    <scope>TISSUE SPECIFICITY</scope>
</reference>
<reference key="7">
    <citation type="journal article" date="2006" name="Proc. Natl. Acad. Sci. U.S.A.">
        <title>Zfp423 controls proliferation and differentiation of neural precursors in cerebellar vermis formation.</title>
        <authorList>
            <person name="Alcaraz W.A."/>
            <person name="Gold D.A."/>
            <person name="Raponi E."/>
            <person name="Gent P.M."/>
            <person name="Concepcion D."/>
            <person name="Hamilton B.A."/>
        </authorList>
    </citation>
    <scope>FUNCTION</scope>
    <scope>DISRUPTION PHENOTYPE</scope>
    <scope>TISSUE SPECIFICITY</scope>
</reference>
<reference key="8">
    <citation type="journal article" date="2007" name="Dev. Biol.">
        <title>The transcription factor Zfp423/OAZ is required for cerebellar development and CNS midline patterning.</title>
        <authorList>
            <person name="Cheng L.E."/>
            <person name="Zhang J."/>
            <person name="Reed R.R."/>
        </authorList>
    </citation>
    <scope>FUNCTION</scope>
    <scope>DEVELOPMENTAL STAGE</scope>
</reference>
<reference key="9">
    <citation type="journal article" date="2007" name="Neuron">
        <title>Zfp423/OAZ participates in a developmental switch during olfactory neurogenesis.</title>
        <authorList>
            <person name="Cheng L.E."/>
            <person name="Reed R.R."/>
        </authorList>
    </citation>
    <scope>FUNCTION</scope>
    <scope>TISSUE SPECIFICITY</scope>
</reference>
<dbReference type="EMBL" id="AY147407">
    <property type="protein sequence ID" value="AAN39840.1"/>
    <property type="molecule type" value="mRNA"/>
</dbReference>
<dbReference type="EMBL" id="AY256893">
    <property type="protein sequence ID" value="AAP33073.1"/>
    <property type="molecule type" value="mRNA"/>
</dbReference>
<dbReference type="EMBL" id="AK122365">
    <property type="protein sequence ID" value="BAC65647.1"/>
    <property type="status" value="ALT_INIT"/>
    <property type="molecule type" value="mRNA"/>
</dbReference>
<dbReference type="EMBL" id="BC059234">
    <property type="protein sequence ID" value="AAH59234.1"/>
    <property type="status" value="ALT_SEQ"/>
    <property type="molecule type" value="mRNA"/>
</dbReference>
<dbReference type="EMBL" id="BC139028">
    <property type="protein sequence ID" value="AAI39029.1"/>
    <property type="molecule type" value="mRNA"/>
</dbReference>
<dbReference type="EMBL" id="BC139030">
    <property type="protein sequence ID" value="AAI39031.1"/>
    <property type="molecule type" value="mRNA"/>
</dbReference>
<dbReference type="EMBL" id="AF188609">
    <property type="protein sequence ID" value="AAG17053.1"/>
    <property type="status" value="ALT_INIT"/>
    <property type="molecule type" value="mRNA"/>
</dbReference>
<dbReference type="CCDS" id="CCDS52627.1">
    <molecule id="Q80TS5-1"/>
</dbReference>
<dbReference type="RefSeq" id="NP_201584.2">
    <molecule id="Q80TS5-1"/>
    <property type="nucleotide sequence ID" value="NM_033327.2"/>
</dbReference>
<dbReference type="BMRB" id="Q80TS5"/>
<dbReference type="BioGRID" id="220465">
    <property type="interactions" value="42"/>
</dbReference>
<dbReference type="FunCoup" id="Q80TS5">
    <property type="interactions" value="1975"/>
</dbReference>
<dbReference type="IntAct" id="Q80TS5">
    <property type="interactions" value="2"/>
</dbReference>
<dbReference type="STRING" id="10090.ENSMUSP00000105282"/>
<dbReference type="GlyGen" id="Q80TS5">
    <property type="glycosylation" value="2 sites"/>
</dbReference>
<dbReference type="iPTMnet" id="Q80TS5"/>
<dbReference type="PhosphoSitePlus" id="Q80TS5"/>
<dbReference type="PaxDb" id="10090-ENSMUSP00000105282"/>
<dbReference type="ProteomicsDB" id="275013">
    <molecule id="Q80TS5-1"/>
</dbReference>
<dbReference type="ProteomicsDB" id="275014">
    <molecule id="Q80TS5-2"/>
</dbReference>
<dbReference type="ABCD" id="Q80TS5">
    <property type="antibodies" value="1 sequenced antibody"/>
</dbReference>
<dbReference type="Antibodypedia" id="28187">
    <property type="antibodies" value="107 antibodies from 27 providers"/>
</dbReference>
<dbReference type="DNASU" id="94187"/>
<dbReference type="Ensembl" id="ENSMUST00000052250.15">
    <molecule id="Q80TS5-2"/>
    <property type="protein sequence ID" value="ENSMUSP00000052379.9"/>
    <property type="gene ID" value="ENSMUSG00000045333.16"/>
</dbReference>
<dbReference type="Ensembl" id="ENSMUST00000109655.9">
    <molecule id="Q80TS5-1"/>
    <property type="protein sequence ID" value="ENSMUSP00000105282.3"/>
    <property type="gene ID" value="ENSMUSG00000045333.16"/>
</dbReference>
<dbReference type="GeneID" id="94187"/>
<dbReference type="KEGG" id="mmu:94187"/>
<dbReference type="UCSC" id="uc009mqv.1">
    <molecule id="Q80TS5-1"/>
    <property type="organism name" value="mouse"/>
</dbReference>
<dbReference type="AGR" id="MGI:1891217"/>
<dbReference type="CTD" id="94187"/>
<dbReference type="MGI" id="MGI:1891217">
    <property type="gene designation" value="Zfp423"/>
</dbReference>
<dbReference type="VEuPathDB" id="HostDB:ENSMUSG00000045333"/>
<dbReference type="eggNOG" id="KOG1721">
    <property type="taxonomic scope" value="Eukaryota"/>
</dbReference>
<dbReference type="GeneTree" id="ENSGT00940000158492"/>
<dbReference type="InParanoid" id="Q80TS5"/>
<dbReference type="OMA" id="RDEGQGW"/>
<dbReference type="OrthoDB" id="10014897at2759"/>
<dbReference type="PhylomeDB" id="Q80TS5"/>
<dbReference type="TreeFam" id="TF331504"/>
<dbReference type="BioGRID-ORCS" id="94187">
    <property type="hits" value="2 hits in 82 CRISPR screens"/>
</dbReference>
<dbReference type="ChiTaRS" id="Zfp423">
    <property type="organism name" value="mouse"/>
</dbReference>
<dbReference type="PRO" id="PR:Q80TS5"/>
<dbReference type="Proteomes" id="UP000000589">
    <property type="component" value="Chromosome 8"/>
</dbReference>
<dbReference type="RNAct" id="Q80TS5">
    <property type="molecule type" value="protein"/>
</dbReference>
<dbReference type="Bgee" id="ENSMUSG00000045333">
    <property type="expression patterns" value="Expressed in embryonic post-anal tail and 213 other cell types or tissues"/>
</dbReference>
<dbReference type="ExpressionAtlas" id="Q80TS5">
    <property type="expression patterns" value="baseline and differential"/>
</dbReference>
<dbReference type="GO" id="GO:0005654">
    <property type="term" value="C:nucleoplasm"/>
    <property type="evidence" value="ECO:0000304"/>
    <property type="project" value="Reactome"/>
</dbReference>
<dbReference type="GO" id="GO:0005634">
    <property type="term" value="C:nucleus"/>
    <property type="evidence" value="ECO:0000314"/>
    <property type="project" value="UniProtKB"/>
</dbReference>
<dbReference type="GO" id="GO:0043565">
    <property type="term" value="F:sequence-specific DNA binding"/>
    <property type="evidence" value="ECO:0000315"/>
    <property type="project" value="MGI"/>
</dbReference>
<dbReference type="GO" id="GO:0008270">
    <property type="term" value="F:zinc ion binding"/>
    <property type="evidence" value="ECO:0007669"/>
    <property type="project" value="UniProtKB-KW"/>
</dbReference>
<dbReference type="GO" id="GO:0050873">
    <property type="term" value="P:brown fat cell differentiation"/>
    <property type="evidence" value="ECO:0000315"/>
    <property type="project" value="BHF-UCL"/>
</dbReference>
<dbReference type="GO" id="GO:0021930">
    <property type="term" value="P:cerebellar granule cell precursor proliferation"/>
    <property type="evidence" value="ECO:0000315"/>
    <property type="project" value="MGI"/>
</dbReference>
<dbReference type="GO" id="GO:0060271">
    <property type="term" value="P:cilium assembly"/>
    <property type="evidence" value="ECO:0000315"/>
    <property type="project" value="MGI"/>
</dbReference>
<dbReference type="GO" id="GO:0120163">
    <property type="term" value="P:negative regulation of cold-induced thermogenesis"/>
    <property type="evidence" value="ECO:0000315"/>
    <property type="project" value="YuBioLab"/>
</dbReference>
<dbReference type="GO" id="GO:0045892">
    <property type="term" value="P:negative regulation of DNA-templated transcription"/>
    <property type="evidence" value="ECO:0000315"/>
    <property type="project" value="MGI"/>
</dbReference>
<dbReference type="GO" id="GO:0007219">
    <property type="term" value="P:Notch signaling pathway"/>
    <property type="evidence" value="ECO:0000314"/>
    <property type="project" value="UniProtKB"/>
</dbReference>
<dbReference type="GO" id="GO:0030513">
    <property type="term" value="P:positive regulation of BMP signaling pathway"/>
    <property type="evidence" value="ECO:0000314"/>
    <property type="project" value="UniProtKB"/>
</dbReference>
<dbReference type="GO" id="GO:0045893">
    <property type="term" value="P:positive regulation of DNA-templated transcription"/>
    <property type="evidence" value="ECO:0000315"/>
    <property type="project" value="UniProtKB"/>
</dbReference>
<dbReference type="GO" id="GO:0061512">
    <property type="term" value="P:protein localization to cilium"/>
    <property type="evidence" value="ECO:0000315"/>
    <property type="project" value="MGI"/>
</dbReference>
<dbReference type="GO" id="GO:0007224">
    <property type="term" value="P:smoothened signaling pathway"/>
    <property type="evidence" value="ECO:0000315"/>
    <property type="project" value="MGI"/>
</dbReference>
<dbReference type="GO" id="GO:0050872">
    <property type="term" value="P:white fat cell differentiation"/>
    <property type="evidence" value="ECO:0000315"/>
    <property type="project" value="BHF-UCL"/>
</dbReference>
<dbReference type="FunFam" id="3.30.160.60:FF:000468">
    <property type="entry name" value="B-cell lymphoma 6 protein-like"/>
    <property type="match status" value="1"/>
</dbReference>
<dbReference type="FunFam" id="3.30.160.60:FF:000469">
    <property type="entry name" value="Zinc finger protein 423"/>
    <property type="match status" value="1"/>
</dbReference>
<dbReference type="FunFam" id="3.30.160.60:FF:000483">
    <property type="entry name" value="Zinc finger protein 423"/>
    <property type="match status" value="1"/>
</dbReference>
<dbReference type="FunFam" id="3.30.160.60:FF:000548">
    <property type="entry name" value="Zinc finger protein 423"/>
    <property type="match status" value="1"/>
</dbReference>
<dbReference type="FunFam" id="3.30.160.60:FF:000760">
    <property type="entry name" value="Zinc finger protein 423"/>
    <property type="match status" value="1"/>
</dbReference>
<dbReference type="FunFam" id="3.30.160.60:FF:004063">
    <property type="entry name" value="Zinc finger protein 423"/>
    <property type="match status" value="1"/>
</dbReference>
<dbReference type="FunFam" id="3.30.160.60:FF:000244">
    <property type="entry name" value="zinc finger protein 423"/>
    <property type="match status" value="1"/>
</dbReference>
<dbReference type="FunFam" id="3.30.160.60:FF:001417">
    <property type="entry name" value="zinc finger protein 423"/>
    <property type="match status" value="1"/>
</dbReference>
<dbReference type="FunFam" id="3.30.160.60:FF:002384">
    <property type="entry name" value="zinc finger protein 423"/>
    <property type="match status" value="1"/>
</dbReference>
<dbReference type="FunFam" id="3.30.160.60:FF:000143">
    <property type="entry name" value="Zinc finger protein 521"/>
    <property type="match status" value="1"/>
</dbReference>
<dbReference type="FunFam" id="3.30.160.60:FF:000167">
    <property type="entry name" value="Zinc finger protein 521"/>
    <property type="match status" value="1"/>
</dbReference>
<dbReference type="FunFam" id="3.30.160.60:FF:000261">
    <property type="entry name" value="Zinc finger protein 521"/>
    <property type="match status" value="1"/>
</dbReference>
<dbReference type="Gene3D" id="3.30.160.60">
    <property type="entry name" value="Classic Zinc Finger"/>
    <property type="match status" value="13"/>
</dbReference>
<dbReference type="InterPro" id="IPR036236">
    <property type="entry name" value="Znf_C2H2_sf"/>
</dbReference>
<dbReference type="InterPro" id="IPR013087">
    <property type="entry name" value="Znf_C2H2_type"/>
</dbReference>
<dbReference type="PANTHER" id="PTHR24379:SF127">
    <property type="entry name" value="BLOODY FINGERS-RELATED"/>
    <property type="match status" value="1"/>
</dbReference>
<dbReference type="PANTHER" id="PTHR24379">
    <property type="entry name" value="KRAB AND ZINC FINGER DOMAIN-CONTAINING"/>
    <property type="match status" value="1"/>
</dbReference>
<dbReference type="Pfam" id="PF00096">
    <property type="entry name" value="zf-C2H2"/>
    <property type="match status" value="7"/>
</dbReference>
<dbReference type="Pfam" id="PF13912">
    <property type="entry name" value="zf-C2H2_6"/>
    <property type="match status" value="2"/>
</dbReference>
<dbReference type="SMART" id="SM00355">
    <property type="entry name" value="ZnF_C2H2"/>
    <property type="match status" value="30"/>
</dbReference>
<dbReference type="SUPFAM" id="SSF57667">
    <property type="entry name" value="beta-beta-alpha zinc fingers"/>
    <property type="match status" value="10"/>
</dbReference>
<dbReference type="PROSITE" id="PS00028">
    <property type="entry name" value="ZINC_FINGER_C2H2_1"/>
    <property type="match status" value="27"/>
</dbReference>
<dbReference type="PROSITE" id="PS50157">
    <property type="entry name" value="ZINC_FINGER_C2H2_2"/>
    <property type="match status" value="23"/>
</dbReference>
<organism>
    <name type="scientific">Mus musculus</name>
    <name type="common">Mouse</name>
    <dbReference type="NCBI Taxonomy" id="10090"/>
    <lineage>
        <taxon>Eukaryota</taxon>
        <taxon>Metazoa</taxon>
        <taxon>Chordata</taxon>
        <taxon>Craniata</taxon>
        <taxon>Vertebrata</taxon>
        <taxon>Euteleostomi</taxon>
        <taxon>Mammalia</taxon>
        <taxon>Eutheria</taxon>
        <taxon>Euarchontoglires</taxon>
        <taxon>Glires</taxon>
        <taxon>Rodentia</taxon>
        <taxon>Myomorpha</taxon>
        <taxon>Muroidea</taxon>
        <taxon>Muridae</taxon>
        <taxon>Murinae</taxon>
        <taxon>Mus</taxon>
        <taxon>Mus</taxon>
    </lineage>
</organism>
<gene>
    <name type="primary">Znf423</name>
    <name type="synonym">Ebfaz</name>
    <name type="synonym">Kiaa0760</name>
    <name type="synonym">Nur12</name>
    <name type="synonym">Oaz</name>
    <name type="synonym">Zfp423</name>
</gene>
<evidence type="ECO:0000250" key="1"/>
<evidence type="ECO:0000250" key="2">
    <source>
        <dbReference type="UniProtKB" id="Q2M1K9"/>
    </source>
</evidence>
<evidence type="ECO:0000255" key="3">
    <source>
        <dbReference type="PROSITE-ProRule" id="PRU00042"/>
    </source>
</evidence>
<evidence type="ECO:0000256" key="4">
    <source>
        <dbReference type="SAM" id="MobiDB-lite"/>
    </source>
</evidence>
<evidence type="ECO:0000269" key="5">
    <source>
    </source>
</evidence>
<evidence type="ECO:0000269" key="6">
    <source>
    </source>
</evidence>
<evidence type="ECO:0000269" key="7">
    <source>
    </source>
</evidence>
<evidence type="ECO:0000269" key="8">
    <source>
    </source>
</evidence>
<evidence type="ECO:0000303" key="9">
    <source>
    </source>
</evidence>
<evidence type="ECO:0000305" key="10"/>
<comment type="function">
    <text evidence="5 6 7 8">Transcription factor that can both act as an activator or a repressor depending on the context. Plays a central role in BMP signaling and olfactory neurogenesis. Associates with SMADs in response to BMP2 leading to activate transcription of BMP target genes. Acts as a transcriptional repressor via its interaction with EBF1, a transcription factor involved in terminal olfactory receptor neurons differentiation; this interaction preventing EBF1 to bind DNA and activate olfactory-specific genes. Involved in olfactory neurogenesis by participating in a developmental switch that regulates the transition from differentiation to maturation in olfactory receptor neurons. Controls proliferation and differentiation of neural precursors in cerebellar vermis formation.</text>
</comment>
<comment type="subunit">
    <text evidence="1">Homodimer (By similarity). Interacts with SMAD1 and SMAD4. Interacts with EBF1 (By similarity). Interacts with PARP1. Interacts with CEP290 (By similarity).</text>
</comment>
<comment type="subcellular location">
    <subcellularLocation>
        <location evidence="1">Nucleus</location>
    </subcellularLocation>
</comment>
<comment type="alternative products">
    <event type="alternative splicing"/>
    <isoform>
        <id>Q80TS5-1</id>
        <name>1</name>
        <sequence type="displayed"/>
    </isoform>
    <isoform>
        <id>Q80TS5-2</id>
        <name>2</name>
        <sequence type="described" ref="VSP_029008"/>
    </isoform>
</comment>
<comment type="tissue specificity">
    <text evidence="5 6 7">Within the cerebellum, Zfp423 is expressed in both ventricular and external germinal zones. Transiently expressed in newly differentiating olfactory-receptor neurons.</text>
</comment>
<comment type="developmental stage">
    <text evidence="8">During embryogenesis, it is highly expressed at the dorsal neuroepithelium flanking the roof plate.</text>
</comment>
<comment type="domain">
    <text evidence="1">Uses different DNA- and protein-binding zinc fingers to regulate the distinct BMP-Smad and Olf signaling pathways. C2H2-type zinc fingers 14-19 mediate the interaction with SMAD1 and SMAD4, while zinc fingers 28-30 mediate the interaction with EBF1. zinc fingers 2-8 bind the 5'-CCGCCC-3' DNA sequence in concert with EBF1, while zinc fingers 9-13 bind BMP target gene promoters in concert with SMADs (By similarity).</text>
</comment>
<comment type="disruption phenotype">
    <text evidence="5 6">Mice are runted and ataxic, the cerebellum is underdeveloped, and the vermis is severely reduced, resulting in diminished proliferation by granule cell precursors in the external germinal layer, especially near the midline, and abnormal differentiation and migration of ventricular zone-derived neurons and Bergmann glia. In the remaining cerebellar structures, the Purkinje cells are poorly developed and mislocalized.</text>
</comment>
<comment type="miscellaneous">
    <text>Znf423 gene is a frequent target of retroviral integration in murine B-cell lymphomas.</text>
</comment>
<comment type="similarity">
    <text evidence="10">Belongs to the krueppel C2H2-type zinc-finger protein family.</text>
</comment>
<comment type="sequence caution" evidence="10">
    <conflict type="erroneous initiation">
        <sequence resource="EMBL-CDS" id="AAG17053"/>
    </conflict>
</comment>
<comment type="sequence caution" evidence="10">
    <conflict type="miscellaneous discrepancy">
        <sequence resource="EMBL-CDS" id="AAH59234"/>
    </conflict>
    <text>Chimeric cDNA.</text>
</comment>
<comment type="sequence caution" evidence="10">
    <conflict type="erroneous initiation">
        <sequence resource="EMBL-CDS" id="BAC65647"/>
    </conflict>
</comment>